<accession>Q9ARF9</accession>
<proteinExistence type="evidence at transcript level"/>
<dbReference type="EC" id="1.13.11.27"/>
<dbReference type="EMBL" id="AJ309203">
    <property type="protein sequence ID" value="CAC37394.1"/>
    <property type="molecule type" value="mRNA"/>
</dbReference>
<dbReference type="SMR" id="Q9ARF9"/>
<dbReference type="UniPathway" id="UPA00139">
    <property type="reaction ID" value="UER00362"/>
</dbReference>
<dbReference type="UniPathway" id="UPA00975"/>
<dbReference type="GO" id="GO:0005737">
    <property type="term" value="C:cytoplasm"/>
    <property type="evidence" value="ECO:0007669"/>
    <property type="project" value="UniProtKB-SubCell"/>
</dbReference>
<dbReference type="GO" id="GO:0003868">
    <property type="term" value="F:4-hydroxyphenylpyruvate dioxygenase activity"/>
    <property type="evidence" value="ECO:0007669"/>
    <property type="project" value="UniProtKB-EC"/>
</dbReference>
<dbReference type="GO" id="GO:0046872">
    <property type="term" value="F:metal ion binding"/>
    <property type="evidence" value="ECO:0007669"/>
    <property type="project" value="UniProtKB-KW"/>
</dbReference>
<dbReference type="GO" id="GO:0006559">
    <property type="term" value="P:L-phenylalanine catabolic process"/>
    <property type="evidence" value="ECO:0007669"/>
    <property type="project" value="UniProtKB-UniPathway"/>
</dbReference>
<dbReference type="GO" id="GO:0006572">
    <property type="term" value="P:tyrosine catabolic process"/>
    <property type="evidence" value="ECO:0007669"/>
    <property type="project" value="UniProtKB-KW"/>
</dbReference>
<dbReference type="CDD" id="cd07250">
    <property type="entry name" value="HPPD_C_like"/>
    <property type="match status" value="1"/>
</dbReference>
<dbReference type="CDD" id="cd08342">
    <property type="entry name" value="HPPD_N_like"/>
    <property type="match status" value="1"/>
</dbReference>
<dbReference type="FunFam" id="3.10.180.10:FF:000013">
    <property type="entry name" value="4-hydroxyphenylpyruvate dioxygenase"/>
    <property type="match status" value="1"/>
</dbReference>
<dbReference type="FunFam" id="3.10.180.10:FF:000025">
    <property type="entry name" value="4-hydroxyphenylpyruvate dioxygenase"/>
    <property type="match status" value="1"/>
</dbReference>
<dbReference type="Gene3D" id="3.10.180.10">
    <property type="entry name" value="2,3-Dihydroxybiphenyl 1,2-Dioxygenase, domain 1"/>
    <property type="match status" value="2"/>
</dbReference>
<dbReference type="InterPro" id="IPR005956">
    <property type="entry name" value="4OHPhenylPyrv_dOase"/>
</dbReference>
<dbReference type="InterPro" id="IPR041735">
    <property type="entry name" value="4OHPhenylPyrv_dOase_C"/>
</dbReference>
<dbReference type="InterPro" id="IPR041736">
    <property type="entry name" value="4OHPhenylPyrv_dOase_N"/>
</dbReference>
<dbReference type="InterPro" id="IPR029068">
    <property type="entry name" value="Glyas_Bleomycin-R_OHBP_Dase"/>
</dbReference>
<dbReference type="InterPro" id="IPR004360">
    <property type="entry name" value="Glyas_Fos-R_dOase_dom"/>
</dbReference>
<dbReference type="InterPro" id="IPR037523">
    <property type="entry name" value="VOC"/>
</dbReference>
<dbReference type="NCBIfam" id="TIGR01263">
    <property type="entry name" value="4HPPD"/>
    <property type="match status" value="1"/>
</dbReference>
<dbReference type="PANTHER" id="PTHR11959">
    <property type="entry name" value="4-HYDROXYPHENYLPYRUVATE DIOXYGENASE"/>
    <property type="match status" value="1"/>
</dbReference>
<dbReference type="PANTHER" id="PTHR11959:SF1">
    <property type="entry name" value="4-HYDROXYPHENYLPYRUVATE DIOXYGENASE"/>
    <property type="match status" value="1"/>
</dbReference>
<dbReference type="Pfam" id="PF00903">
    <property type="entry name" value="Glyoxalase"/>
    <property type="match status" value="1"/>
</dbReference>
<dbReference type="PIRSF" id="PIRSF009283">
    <property type="entry name" value="HPP_dOase"/>
    <property type="match status" value="1"/>
</dbReference>
<dbReference type="SUPFAM" id="SSF54593">
    <property type="entry name" value="Glyoxalase/Bleomycin resistance protein/Dihydroxybiphenyl dioxygenase"/>
    <property type="match status" value="1"/>
</dbReference>
<dbReference type="PROSITE" id="PS51819">
    <property type="entry name" value="VOC"/>
    <property type="match status" value="2"/>
</dbReference>
<name>HPPD_PLESU</name>
<evidence type="ECO:0000250" key="1"/>
<evidence type="ECO:0000255" key="2">
    <source>
        <dbReference type="PROSITE-ProRule" id="PRU01163"/>
    </source>
</evidence>
<evidence type="ECO:0000305" key="3"/>
<sequence>MGQESTAAAAVVPAEFKLVGHKNFVRSNPMSDHFPVHRFHHVEFWCGDATNTSRRFSWGLGMPLVAKSDLSTGNSAHASYLLRSGELSFVFTAPYSPSLAEPSSASIPTFSFSDHRAFTSSHGLAVRAVAIQVDSASSAYSAAVSRGAKPVSPPVVLADCETAIAEVHLYGDTVLRFVSCGSGADGWFLPGFEVVGDGVSCQELDYGIRRLDHAVGNVPKLEPVVDYLKKFTGFHEFAEFTAEDVGTAESGLNSVVLANNNENVLFPLNEPVYGTKRKSQIQTYLDHNEGAGVQHLALITEDIFRTLREMRKRSEVGGFEFMPSPPPTYYRNLKSRAGDVLSDEQIEECEKLGILIDRDDQGTLLQIFTKPVGDRPTLFIEIIQRVGCMMKDEEGKMYQKGGCGGFGKGNFSELFKSIEEYEKMLESKLVTKTAMA</sequence>
<keyword id="KW-0963">Cytoplasm</keyword>
<keyword id="KW-0223">Dioxygenase</keyword>
<keyword id="KW-0408">Iron</keyword>
<keyword id="KW-0479">Metal-binding</keyword>
<keyword id="KW-0560">Oxidoreductase</keyword>
<keyword id="KW-0585">Phenylalanine catabolism</keyword>
<keyword id="KW-0677">Repeat</keyword>
<keyword id="KW-0828">Tyrosine catabolism</keyword>
<reference key="1">
    <citation type="thesis" date="2001" institute="Philipps-Universitaet Marburg" country="Germany">
        <authorList>
            <person name="Kim K.H."/>
        </authorList>
    </citation>
    <scope>NUCLEOTIDE SEQUENCE [MRNA]</scope>
</reference>
<feature type="chain" id="PRO_0000088400" description="4-hydroxyphenylpyruvate dioxygenase">
    <location>
        <begin position="1"/>
        <end position="436"/>
    </location>
</feature>
<feature type="domain" description="VOC 1" evidence="2">
    <location>
        <begin position="38"/>
        <end position="194"/>
    </location>
</feature>
<feature type="domain" description="VOC 2" evidence="2">
    <location>
        <begin position="210"/>
        <end position="370"/>
    </location>
</feature>
<feature type="binding site" evidence="1">
    <location>
        <position position="213"/>
    </location>
    <ligand>
        <name>Fe cation</name>
        <dbReference type="ChEBI" id="CHEBI:24875"/>
    </ligand>
</feature>
<feature type="binding site" evidence="1">
    <location>
        <position position="295"/>
    </location>
    <ligand>
        <name>Fe cation</name>
        <dbReference type="ChEBI" id="CHEBI:24875"/>
    </ligand>
</feature>
<feature type="binding site" evidence="1">
    <location>
        <position position="381"/>
    </location>
    <ligand>
        <name>Fe cation</name>
        <dbReference type="ChEBI" id="CHEBI:24875"/>
    </ligand>
</feature>
<organism>
    <name type="scientific">Plectranthus scutellarioides</name>
    <name type="common">Coleus</name>
    <name type="synonym">Solenostemon scutellarioides</name>
    <dbReference type="NCBI Taxonomy" id="4142"/>
    <lineage>
        <taxon>Eukaryota</taxon>
        <taxon>Viridiplantae</taxon>
        <taxon>Streptophyta</taxon>
        <taxon>Embryophyta</taxon>
        <taxon>Tracheophyta</taxon>
        <taxon>Spermatophyta</taxon>
        <taxon>Magnoliopsida</taxon>
        <taxon>eudicotyledons</taxon>
        <taxon>Gunneridae</taxon>
        <taxon>Pentapetalae</taxon>
        <taxon>asterids</taxon>
        <taxon>lamiids</taxon>
        <taxon>Lamiales</taxon>
        <taxon>Lamiaceae</taxon>
        <taxon>Nepetoideae</taxon>
        <taxon>Ocimeae</taxon>
        <taxon>Plectranthinae</taxon>
        <taxon>Coleus</taxon>
    </lineage>
</organism>
<protein>
    <recommendedName>
        <fullName>4-hydroxyphenylpyruvate dioxygenase</fullName>
        <ecNumber>1.13.11.27</ecNumber>
    </recommendedName>
    <alternativeName>
        <fullName>4-hydroxyphenylpyruvic acid oxidase</fullName>
        <shortName>4HPPD</shortName>
        <shortName>HPD</shortName>
        <shortName>HPPDase</shortName>
    </alternativeName>
</protein>
<comment type="catalytic activity">
    <reaction>
        <text>3-(4-hydroxyphenyl)pyruvate + O2 = homogentisate + CO2</text>
        <dbReference type="Rhea" id="RHEA:16189"/>
        <dbReference type="ChEBI" id="CHEBI:15379"/>
        <dbReference type="ChEBI" id="CHEBI:16169"/>
        <dbReference type="ChEBI" id="CHEBI:16526"/>
        <dbReference type="ChEBI" id="CHEBI:36242"/>
        <dbReference type="EC" id="1.13.11.27"/>
    </reaction>
</comment>
<comment type="cofactor">
    <cofactor evidence="1">
        <name>Fe cation</name>
        <dbReference type="ChEBI" id="CHEBI:24875"/>
    </cofactor>
    <text evidence="1">Binds 1 Fe cation per subunit.</text>
</comment>
<comment type="pathway">
    <text>Amino-acid degradation; L-phenylalanine degradation; acetoacetate and fumarate from L-phenylalanine: step 3/6.</text>
</comment>
<comment type="pathway">
    <text>Cofactor biosynthesis; prenylquinone biosynthesis.</text>
</comment>
<comment type="subcellular location">
    <subcellularLocation>
        <location evidence="1">Cytoplasm</location>
    </subcellularLocation>
</comment>
<comment type="similarity">
    <text evidence="3">Belongs to the 4HPPD family.</text>
</comment>